<feature type="chain" id="PRO_0000077139" description="Large ribosomal subunit protein uL3">
    <location>
        <begin position="1"/>
        <end position="211"/>
    </location>
</feature>
<feature type="modified residue" description="N5-methylglutamine" evidence="1">
    <location>
        <position position="150"/>
    </location>
</feature>
<gene>
    <name evidence="1" type="primary">rplC</name>
    <name type="ordered locus">PP_0454</name>
</gene>
<protein>
    <recommendedName>
        <fullName evidence="1">Large ribosomal subunit protein uL3</fullName>
    </recommendedName>
    <alternativeName>
        <fullName evidence="2">50S ribosomal protein L3</fullName>
    </alternativeName>
</protein>
<proteinExistence type="inferred from homology"/>
<sequence>MTIGVIGRKCGMTRIFTEEGVSIPVTVIEIEPNRVTQFKTEETDGYRAVQVTVGERRASRVTAAQAGHFAKANVAAGRGVWEFRLEEGDFQAGDLIKAELFTAGQLVDVTGQSKGKGFAGTIKRWNFRGQDNTHGNSVSHRVPGSIGQCQTPGRVFKGKKMSGHMGAERVTVQSLEVVRVDAERNLLLIKGAVPGATGGDVVVRPAVKARG</sequence>
<evidence type="ECO:0000255" key="1">
    <source>
        <dbReference type="HAMAP-Rule" id="MF_01325"/>
    </source>
</evidence>
<evidence type="ECO:0000305" key="2"/>
<keyword id="KW-0488">Methylation</keyword>
<keyword id="KW-1185">Reference proteome</keyword>
<keyword id="KW-0687">Ribonucleoprotein</keyword>
<keyword id="KW-0689">Ribosomal protein</keyword>
<keyword id="KW-0694">RNA-binding</keyword>
<keyword id="KW-0699">rRNA-binding</keyword>
<organism>
    <name type="scientific">Pseudomonas putida (strain ATCC 47054 / DSM 6125 / CFBP 8728 / NCIMB 11950 / KT2440)</name>
    <dbReference type="NCBI Taxonomy" id="160488"/>
    <lineage>
        <taxon>Bacteria</taxon>
        <taxon>Pseudomonadati</taxon>
        <taxon>Pseudomonadota</taxon>
        <taxon>Gammaproteobacteria</taxon>
        <taxon>Pseudomonadales</taxon>
        <taxon>Pseudomonadaceae</taxon>
        <taxon>Pseudomonas</taxon>
    </lineage>
</organism>
<dbReference type="EMBL" id="AE015451">
    <property type="protein sequence ID" value="AAN66084.1"/>
    <property type="status" value="ALT_INIT"/>
    <property type="molecule type" value="Genomic_DNA"/>
</dbReference>
<dbReference type="RefSeq" id="NP_742620.3">
    <property type="nucleotide sequence ID" value="NC_002947.4"/>
</dbReference>
<dbReference type="RefSeq" id="WP_003255486.1">
    <property type="nucleotide sequence ID" value="NZ_CP169744.1"/>
</dbReference>
<dbReference type="SMR" id="Q88QN5"/>
<dbReference type="STRING" id="160488.PP_0454"/>
<dbReference type="PaxDb" id="160488-PP_0454"/>
<dbReference type="GeneID" id="83677752"/>
<dbReference type="KEGG" id="ppu:PP_0454"/>
<dbReference type="PATRIC" id="fig|160488.4.peg.486"/>
<dbReference type="eggNOG" id="COG0087">
    <property type="taxonomic scope" value="Bacteria"/>
</dbReference>
<dbReference type="HOGENOM" id="CLU_044142_4_1_6"/>
<dbReference type="OrthoDB" id="9806135at2"/>
<dbReference type="PhylomeDB" id="Q88QN5"/>
<dbReference type="Proteomes" id="UP000000556">
    <property type="component" value="Chromosome"/>
</dbReference>
<dbReference type="GO" id="GO:0022625">
    <property type="term" value="C:cytosolic large ribosomal subunit"/>
    <property type="evidence" value="ECO:0007669"/>
    <property type="project" value="TreeGrafter"/>
</dbReference>
<dbReference type="GO" id="GO:0019843">
    <property type="term" value="F:rRNA binding"/>
    <property type="evidence" value="ECO:0007669"/>
    <property type="project" value="UniProtKB-UniRule"/>
</dbReference>
<dbReference type="GO" id="GO:0003735">
    <property type="term" value="F:structural constituent of ribosome"/>
    <property type="evidence" value="ECO:0007669"/>
    <property type="project" value="InterPro"/>
</dbReference>
<dbReference type="GO" id="GO:0006412">
    <property type="term" value="P:translation"/>
    <property type="evidence" value="ECO:0007669"/>
    <property type="project" value="UniProtKB-UniRule"/>
</dbReference>
<dbReference type="FunFam" id="2.40.30.10:FF:000004">
    <property type="entry name" value="50S ribosomal protein L3"/>
    <property type="match status" value="1"/>
</dbReference>
<dbReference type="FunFam" id="3.30.160.810:FF:000001">
    <property type="entry name" value="50S ribosomal protein L3"/>
    <property type="match status" value="1"/>
</dbReference>
<dbReference type="Gene3D" id="3.30.160.810">
    <property type="match status" value="1"/>
</dbReference>
<dbReference type="Gene3D" id="2.40.30.10">
    <property type="entry name" value="Translation factors"/>
    <property type="match status" value="1"/>
</dbReference>
<dbReference type="HAMAP" id="MF_01325_B">
    <property type="entry name" value="Ribosomal_uL3_B"/>
    <property type="match status" value="1"/>
</dbReference>
<dbReference type="InterPro" id="IPR000597">
    <property type="entry name" value="Ribosomal_uL3"/>
</dbReference>
<dbReference type="InterPro" id="IPR019927">
    <property type="entry name" value="Ribosomal_uL3_bac/org-type"/>
</dbReference>
<dbReference type="InterPro" id="IPR019926">
    <property type="entry name" value="Ribosomal_uL3_CS"/>
</dbReference>
<dbReference type="InterPro" id="IPR009000">
    <property type="entry name" value="Transl_B-barrel_sf"/>
</dbReference>
<dbReference type="NCBIfam" id="TIGR03625">
    <property type="entry name" value="L3_bact"/>
    <property type="match status" value="1"/>
</dbReference>
<dbReference type="PANTHER" id="PTHR11229">
    <property type="entry name" value="50S RIBOSOMAL PROTEIN L3"/>
    <property type="match status" value="1"/>
</dbReference>
<dbReference type="PANTHER" id="PTHR11229:SF16">
    <property type="entry name" value="LARGE RIBOSOMAL SUBUNIT PROTEIN UL3C"/>
    <property type="match status" value="1"/>
</dbReference>
<dbReference type="Pfam" id="PF00297">
    <property type="entry name" value="Ribosomal_L3"/>
    <property type="match status" value="1"/>
</dbReference>
<dbReference type="SUPFAM" id="SSF50447">
    <property type="entry name" value="Translation proteins"/>
    <property type="match status" value="1"/>
</dbReference>
<dbReference type="PROSITE" id="PS00474">
    <property type="entry name" value="RIBOSOMAL_L3"/>
    <property type="match status" value="1"/>
</dbReference>
<accession>Q88QN5</accession>
<comment type="function">
    <text evidence="1">One of the primary rRNA binding proteins, it binds directly near the 3'-end of the 23S rRNA, where it nucleates assembly of the 50S subunit.</text>
</comment>
<comment type="subunit">
    <text evidence="1">Part of the 50S ribosomal subunit. Forms a cluster with proteins L14 and L19.</text>
</comment>
<comment type="PTM">
    <text evidence="1">Methylated by PrmB.</text>
</comment>
<comment type="similarity">
    <text evidence="1">Belongs to the universal ribosomal protein uL3 family.</text>
</comment>
<comment type="sequence caution" evidence="2">
    <conflict type="erroneous initiation">
        <sequence resource="EMBL-CDS" id="AAN66084"/>
    </conflict>
</comment>
<reference key="1">
    <citation type="journal article" date="2002" name="Environ. Microbiol.">
        <title>Complete genome sequence and comparative analysis of the metabolically versatile Pseudomonas putida KT2440.</title>
        <authorList>
            <person name="Nelson K.E."/>
            <person name="Weinel C."/>
            <person name="Paulsen I.T."/>
            <person name="Dodson R.J."/>
            <person name="Hilbert H."/>
            <person name="Martins dos Santos V.A.P."/>
            <person name="Fouts D.E."/>
            <person name="Gill S.R."/>
            <person name="Pop M."/>
            <person name="Holmes M."/>
            <person name="Brinkac L.M."/>
            <person name="Beanan M.J."/>
            <person name="DeBoy R.T."/>
            <person name="Daugherty S.C."/>
            <person name="Kolonay J.F."/>
            <person name="Madupu R."/>
            <person name="Nelson W.C."/>
            <person name="White O."/>
            <person name="Peterson J.D."/>
            <person name="Khouri H.M."/>
            <person name="Hance I."/>
            <person name="Chris Lee P."/>
            <person name="Holtzapple E.K."/>
            <person name="Scanlan D."/>
            <person name="Tran K."/>
            <person name="Moazzez A."/>
            <person name="Utterback T.R."/>
            <person name="Rizzo M."/>
            <person name="Lee K."/>
            <person name="Kosack D."/>
            <person name="Moestl D."/>
            <person name="Wedler H."/>
            <person name="Lauber J."/>
            <person name="Stjepandic D."/>
            <person name="Hoheisel J."/>
            <person name="Straetz M."/>
            <person name="Heim S."/>
            <person name="Kiewitz C."/>
            <person name="Eisen J.A."/>
            <person name="Timmis K.N."/>
            <person name="Duesterhoeft A."/>
            <person name="Tuemmler B."/>
            <person name="Fraser C.M."/>
        </authorList>
    </citation>
    <scope>NUCLEOTIDE SEQUENCE [LARGE SCALE GENOMIC DNA]</scope>
    <source>
        <strain>ATCC 47054 / DSM 6125 / CFBP 8728 / NCIMB 11950 / KT2440</strain>
    </source>
</reference>
<name>RL3_PSEPK</name>